<proteinExistence type="inferred from homology"/>
<gene>
    <name evidence="1" type="primary">ruvB</name>
    <name type="ordered locus">SRU_1146</name>
</gene>
<name>RUVB_SALRD</name>
<comment type="function">
    <text evidence="1">The RuvA-RuvB-RuvC complex processes Holliday junction (HJ) DNA during genetic recombination and DNA repair, while the RuvA-RuvB complex plays an important role in the rescue of blocked DNA replication forks via replication fork reversal (RFR). RuvA specifically binds to HJ cruciform DNA, conferring on it an open structure. The RuvB hexamer acts as an ATP-dependent pump, pulling dsDNA into and through the RuvAB complex. RuvB forms 2 homohexamers on either side of HJ DNA bound by 1 or 2 RuvA tetramers; 4 subunits per hexamer contact DNA at a time. Coordinated motions by a converter formed by DNA-disengaged RuvB subunits stimulates ATP hydrolysis and nucleotide exchange. Immobilization of the converter enables RuvB to convert the ATP-contained energy into a lever motion, pulling 2 nucleotides of DNA out of the RuvA tetramer per ATP hydrolyzed, thus driving DNA branch migration. The RuvB motors rotate together with the DNA substrate, which together with the progressing nucleotide cycle form the mechanistic basis for DNA recombination by continuous HJ branch migration. Branch migration allows RuvC to scan DNA until it finds its consensus sequence, where it cleaves and resolves cruciform DNA.</text>
</comment>
<comment type="catalytic activity">
    <reaction evidence="1">
        <text>ATP + H2O = ADP + phosphate + H(+)</text>
        <dbReference type="Rhea" id="RHEA:13065"/>
        <dbReference type="ChEBI" id="CHEBI:15377"/>
        <dbReference type="ChEBI" id="CHEBI:15378"/>
        <dbReference type="ChEBI" id="CHEBI:30616"/>
        <dbReference type="ChEBI" id="CHEBI:43474"/>
        <dbReference type="ChEBI" id="CHEBI:456216"/>
    </reaction>
</comment>
<comment type="subunit">
    <text evidence="1">Homohexamer. Forms an RuvA(8)-RuvB(12)-Holliday junction (HJ) complex. HJ DNA is sandwiched between 2 RuvA tetramers; dsDNA enters through RuvA and exits via RuvB. An RuvB hexamer assembles on each DNA strand where it exits the tetramer. Each RuvB hexamer is contacted by two RuvA subunits (via domain III) on 2 adjacent RuvB subunits; this complex drives branch migration. In the full resolvosome a probable DNA-RuvA(4)-RuvB(12)-RuvC(2) complex forms which resolves the HJ.</text>
</comment>
<comment type="subcellular location">
    <subcellularLocation>
        <location evidence="1">Cytoplasm</location>
    </subcellularLocation>
</comment>
<comment type="domain">
    <text evidence="1">Has 3 domains, the large (RuvB-L) and small ATPase (RuvB-S) domains and the C-terminal head (RuvB-H) domain. The head domain binds DNA, while the ATPase domains jointly bind ATP, ADP or are empty depending on the state of the subunit in the translocation cycle. During a single DNA translocation step the structure of each domain remains the same, but their relative positions change.</text>
</comment>
<comment type="similarity">
    <text evidence="1">Belongs to the RuvB family.</text>
</comment>
<evidence type="ECO:0000255" key="1">
    <source>
        <dbReference type="HAMAP-Rule" id="MF_00016"/>
    </source>
</evidence>
<reference key="1">
    <citation type="journal article" date="2005" name="Proc. Natl. Acad. Sci. U.S.A.">
        <title>The genome of Salinibacter ruber: convergence and gene exchange among hyperhalophilic bacteria and archaea.</title>
        <authorList>
            <person name="Mongodin E.F."/>
            <person name="Nelson K.E."/>
            <person name="Daugherty S."/>
            <person name="DeBoy R.T."/>
            <person name="Wister J."/>
            <person name="Khouri H."/>
            <person name="Weidman J."/>
            <person name="Walsh D.A."/>
            <person name="Papke R.T."/>
            <person name="Sanchez Perez G."/>
            <person name="Sharma A.K."/>
            <person name="Nesbo C.L."/>
            <person name="MacLeod D."/>
            <person name="Bapteste E."/>
            <person name="Doolittle W.F."/>
            <person name="Charlebois R.L."/>
            <person name="Legault B."/>
            <person name="Rodriguez-Valera F."/>
        </authorList>
    </citation>
    <scope>NUCLEOTIDE SEQUENCE [LARGE SCALE GENOMIC DNA]</scope>
    <source>
        <strain>DSM 13855 / CECT 5946 / M31</strain>
    </source>
</reference>
<organism>
    <name type="scientific">Salinibacter ruber (strain DSM 13855 / M31)</name>
    <dbReference type="NCBI Taxonomy" id="309807"/>
    <lineage>
        <taxon>Bacteria</taxon>
        <taxon>Pseudomonadati</taxon>
        <taxon>Rhodothermota</taxon>
        <taxon>Rhodothermia</taxon>
        <taxon>Rhodothermales</taxon>
        <taxon>Salinibacteraceae</taxon>
        <taxon>Salinibacter</taxon>
    </lineage>
</organism>
<feature type="chain" id="PRO_0000235400" description="Holliday junction branch migration complex subunit RuvB">
    <location>
        <begin position="1"/>
        <end position="344"/>
    </location>
</feature>
<feature type="region of interest" description="Large ATPase domain (RuvB-L)" evidence="1">
    <location>
        <begin position="1"/>
        <end position="185"/>
    </location>
</feature>
<feature type="region of interest" description="Small ATPAse domain (RuvB-S)" evidence="1">
    <location>
        <begin position="186"/>
        <end position="256"/>
    </location>
</feature>
<feature type="region of interest" description="Head domain (RuvB-H)" evidence="1">
    <location>
        <begin position="259"/>
        <end position="344"/>
    </location>
</feature>
<feature type="binding site" evidence="1">
    <location>
        <position position="24"/>
    </location>
    <ligand>
        <name>ATP</name>
        <dbReference type="ChEBI" id="CHEBI:30616"/>
    </ligand>
</feature>
<feature type="binding site" evidence="1">
    <location>
        <position position="25"/>
    </location>
    <ligand>
        <name>ATP</name>
        <dbReference type="ChEBI" id="CHEBI:30616"/>
    </ligand>
</feature>
<feature type="binding site" evidence="1">
    <location>
        <position position="66"/>
    </location>
    <ligand>
        <name>ATP</name>
        <dbReference type="ChEBI" id="CHEBI:30616"/>
    </ligand>
</feature>
<feature type="binding site" evidence="1">
    <location>
        <position position="69"/>
    </location>
    <ligand>
        <name>ATP</name>
        <dbReference type="ChEBI" id="CHEBI:30616"/>
    </ligand>
</feature>
<feature type="binding site" evidence="1">
    <location>
        <position position="70"/>
    </location>
    <ligand>
        <name>ATP</name>
        <dbReference type="ChEBI" id="CHEBI:30616"/>
    </ligand>
</feature>
<feature type="binding site" evidence="1">
    <location>
        <position position="70"/>
    </location>
    <ligand>
        <name>Mg(2+)</name>
        <dbReference type="ChEBI" id="CHEBI:18420"/>
    </ligand>
</feature>
<feature type="binding site" evidence="1">
    <location>
        <position position="71"/>
    </location>
    <ligand>
        <name>ATP</name>
        <dbReference type="ChEBI" id="CHEBI:30616"/>
    </ligand>
</feature>
<feature type="binding site" evidence="1">
    <location>
        <begin position="132"/>
        <end position="134"/>
    </location>
    <ligand>
        <name>ATP</name>
        <dbReference type="ChEBI" id="CHEBI:30616"/>
    </ligand>
</feature>
<feature type="binding site" evidence="1">
    <location>
        <position position="175"/>
    </location>
    <ligand>
        <name>ATP</name>
        <dbReference type="ChEBI" id="CHEBI:30616"/>
    </ligand>
</feature>
<feature type="binding site" evidence="1">
    <location>
        <position position="185"/>
    </location>
    <ligand>
        <name>ATP</name>
        <dbReference type="ChEBI" id="CHEBI:30616"/>
    </ligand>
</feature>
<feature type="binding site" evidence="1">
    <location>
        <position position="222"/>
    </location>
    <ligand>
        <name>ATP</name>
        <dbReference type="ChEBI" id="CHEBI:30616"/>
    </ligand>
</feature>
<feature type="binding site" evidence="1">
    <location>
        <position position="314"/>
    </location>
    <ligand>
        <name>DNA</name>
        <dbReference type="ChEBI" id="CHEBI:16991"/>
    </ligand>
</feature>
<feature type="binding site" evidence="1">
    <location>
        <position position="319"/>
    </location>
    <ligand>
        <name>DNA</name>
        <dbReference type="ChEBI" id="CHEBI:16991"/>
    </ligand>
</feature>
<sequence>MSTSRSDALKAEADRSDNDVEKLLRPQSLDEFVGQEKIKENLNVFMKAALQRGETLDHVLLSGPPGLGKTTLAHIIANEMGARIRTSSGPVLEKPADIAGVLTNLEEGDLLFIDEIHRLSSVVEEYLYSAMEDYRIDIVIDQGPNARTVQIDLPPFTMVGATTRKGLLTAPLRARFGIDFRYDYYTADLLQEITQRSARILDVETTPDGAYEIARRSRGTPRVANRLLRRTRDFAEVEGDGEITKAIADRALNALDVDEEGLDDMDARILLTLIDNFDGGPTGLKNLAVSVGEESGTLEEVYEPYLIQEGFMERTPQGRVALQRAYDHFDRSSPAADQDLFDQE</sequence>
<keyword id="KW-0067">ATP-binding</keyword>
<keyword id="KW-0963">Cytoplasm</keyword>
<keyword id="KW-0227">DNA damage</keyword>
<keyword id="KW-0233">DNA recombination</keyword>
<keyword id="KW-0234">DNA repair</keyword>
<keyword id="KW-0238">DNA-binding</keyword>
<keyword id="KW-0378">Hydrolase</keyword>
<keyword id="KW-0547">Nucleotide-binding</keyword>
<keyword id="KW-1185">Reference proteome</keyword>
<protein>
    <recommendedName>
        <fullName evidence="1">Holliday junction branch migration complex subunit RuvB</fullName>
        <ecNumber evidence="1">3.6.4.-</ecNumber>
    </recommendedName>
</protein>
<accession>Q2S3F9</accession>
<dbReference type="EC" id="3.6.4.-" evidence="1"/>
<dbReference type="EMBL" id="CP000159">
    <property type="protein sequence ID" value="ABC44766.1"/>
    <property type="molecule type" value="Genomic_DNA"/>
</dbReference>
<dbReference type="RefSeq" id="WP_011403900.1">
    <property type="nucleotide sequence ID" value="NC_007677.1"/>
</dbReference>
<dbReference type="RefSeq" id="YP_445272.1">
    <property type="nucleotide sequence ID" value="NC_007677.1"/>
</dbReference>
<dbReference type="SMR" id="Q2S3F9"/>
<dbReference type="STRING" id="309807.SRU_1146"/>
<dbReference type="EnsemblBacteria" id="ABC44766">
    <property type="protein sequence ID" value="ABC44766"/>
    <property type="gene ID" value="SRU_1146"/>
</dbReference>
<dbReference type="GeneID" id="83728053"/>
<dbReference type="KEGG" id="sru:SRU_1146"/>
<dbReference type="PATRIC" id="fig|309807.25.peg.1184"/>
<dbReference type="eggNOG" id="COG2255">
    <property type="taxonomic scope" value="Bacteria"/>
</dbReference>
<dbReference type="HOGENOM" id="CLU_055599_1_0_10"/>
<dbReference type="OrthoDB" id="9804478at2"/>
<dbReference type="Proteomes" id="UP000008674">
    <property type="component" value="Chromosome"/>
</dbReference>
<dbReference type="GO" id="GO:0005737">
    <property type="term" value="C:cytoplasm"/>
    <property type="evidence" value="ECO:0007669"/>
    <property type="project" value="UniProtKB-SubCell"/>
</dbReference>
<dbReference type="GO" id="GO:0048476">
    <property type="term" value="C:Holliday junction resolvase complex"/>
    <property type="evidence" value="ECO:0007669"/>
    <property type="project" value="UniProtKB-UniRule"/>
</dbReference>
<dbReference type="GO" id="GO:0005524">
    <property type="term" value="F:ATP binding"/>
    <property type="evidence" value="ECO:0007669"/>
    <property type="project" value="UniProtKB-UniRule"/>
</dbReference>
<dbReference type="GO" id="GO:0016887">
    <property type="term" value="F:ATP hydrolysis activity"/>
    <property type="evidence" value="ECO:0007669"/>
    <property type="project" value="InterPro"/>
</dbReference>
<dbReference type="GO" id="GO:0000400">
    <property type="term" value="F:four-way junction DNA binding"/>
    <property type="evidence" value="ECO:0007669"/>
    <property type="project" value="UniProtKB-UniRule"/>
</dbReference>
<dbReference type="GO" id="GO:0009378">
    <property type="term" value="F:four-way junction helicase activity"/>
    <property type="evidence" value="ECO:0007669"/>
    <property type="project" value="InterPro"/>
</dbReference>
<dbReference type="GO" id="GO:0006310">
    <property type="term" value="P:DNA recombination"/>
    <property type="evidence" value="ECO:0007669"/>
    <property type="project" value="UniProtKB-UniRule"/>
</dbReference>
<dbReference type="GO" id="GO:0006281">
    <property type="term" value="P:DNA repair"/>
    <property type="evidence" value="ECO:0007669"/>
    <property type="project" value="UniProtKB-UniRule"/>
</dbReference>
<dbReference type="CDD" id="cd00009">
    <property type="entry name" value="AAA"/>
    <property type="match status" value="1"/>
</dbReference>
<dbReference type="FunFam" id="1.10.8.60:FF:000023">
    <property type="entry name" value="Holliday junction ATP-dependent DNA helicase RuvB"/>
    <property type="match status" value="1"/>
</dbReference>
<dbReference type="Gene3D" id="1.10.8.60">
    <property type="match status" value="1"/>
</dbReference>
<dbReference type="Gene3D" id="3.40.50.300">
    <property type="entry name" value="P-loop containing nucleotide triphosphate hydrolases"/>
    <property type="match status" value="1"/>
</dbReference>
<dbReference type="Gene3D" id="1.10.10.10">
    <property type="entry name" value="Winged helix-like DNA-binding domain superfamily/Winged helix DNA-binding domain"/>
    <property type="match status" value="1"/>
</dbReference>
<dbReference type="HAMAP" id="MF_00016">
    <property type="entry name" value="DNA_HJ_migration_RuvB"/>
    <property type="match status" value="1"/>
</dbReference>
<dbReference type="InterPro" id="IPR003593">
    <property type="entry name" value="AAA+_ATPase"/>
</dbReference>
<dbReference type="InterPro" id="IPR041445">
    <property type="entry name" value="AAA_lid_4"/>
</dbReference>
<dbReference type="InterPro" id="IPR004605">
    <property type="entry name" value="DNA_helicase_Holl-junc_RuvB"/>
</dbReference>
<dbReference type="InterPro" id="IPR027417">
    <property type="entry name" value="P-loop_NTPase"/>
</dbReference>
<dbReference type="InterPro" id="IPR008824">
    <property type="entry name" value="RuvB-like_N"/>
</dbReference>
<dbReference type="InterPro" id="IPR008823">
    <property type="entry name" value="RuvB_C"/>
</dbReference>
<dbReference type="InterPro" id="IPR036388">
    <property type="entry name" value="WH-like_DNA-bd_sf"/>
</dbReference>
<dbReference type="InterPro" id="IPR036390">
    <property type="entry name" value="WH_DNA-bd_sf"/>
</dbReference>
<dbReference type="NCBIfam" id="NF000868">
    <property type="entry name" value="PRK00080.1"/>
    <property type="match status" value="1"/>
</dbReference>
<dbReference type="NCBIfam" id="TIGR00635">
    <property type="entry name" value="ruvB"/>
    <property type="match status" value="1"/>
</dbReference>
<dbReference type="PANTHER" id="PTHR42848">
    <property type="match status" value="1"/>
</dbReference>
<dbReference type="PANTHER" id="PTHR42848:SF1">
    <property type="entry name" value="HOLLIDAY JUNCTION BRANCH MIGRATION COMPLEX SUBUNIT RUVB"/>
    <property type="match status" value="1"/>
</dbReference>
<dbReference type="Pfam" id="PF17864">
    <property type="entry name" value="AAA_lid_4"/>
    <property type="match status" value="1"/>
</dbReference>
<dbReference type="Pfam" id="PF05491">
    <property type="entry name" value="RuvB_C"/>
    <property type="match status" value="1"/>
</dbReference>
<dbReference type="Pfam" id="PF05496">
    <property type="entry name" value="RuvB_N"/>
    <property type="match status" value="1"/>
</dbReference>
<dbReference type="SMART" id="SM00382">
    <property type="entry name" value="AAA"/>
    <property type="match status" value="1"/>
</dbReference>
<dbReference type="SUPFAM" id="SSF52540">
    <property type="entry name" value="P-loop containing nucleoside triphosphate hydrolases"/>
    <property type="match status" value="1"/>
</dbReference>
<dbReference type="SUPFAM" id="SSF46785">
    <property type="entry name" value="Winged helix' DNA-binding domain"/>
    <property type="match status" value="1"/>
</dbReference>